<protein>
    <recommendedName>
        <fullName evidence="1">Chaperone protein HtpG</fullName>
    </recommendedName>
    <alternativeName>
        <fullName evidence="1">Heat shock protein HtpG</fullName>
    </alternativeName>
    <alternativeName>
        <fullName evidence="1">High temperature protein G</fullName>
    </alternativeName>
</protein>
<organism>
    <name type="scientific">Aliivibrio salmonicida (strain LFI1238)</name>
    <name type="common">Vibrio salmonicida (strain LFI1238)</name>
    <dbReference type="NCBI Taxonomy" id="316275"/>
    <lineage>
        <taxon>Bacteria</taxon>
        <taxon>Pseudomonadati</taxon>
        <taxon>Pseudomonadota</taxon>
        <taxon>Gammaproteobacteria</taxon>
        <taxon>Vibrionales</taxon>
        <taxon>Vibrionaceae</taxon>
        <taxon>Aliivibrio</taxon>
    </lineage>
</organism>
<feature type="chain" id="PRO_1000146004" description="Chaperone protein HtpG">
    <location>
        <begin position="1"/>
        <end position="632"/>
    </location>
</feature>
<feature type="region of interest" description="A; substrate-binding" evidence="1">
    <location>
        <begin position="1"/>
        <end position="343"/>
    </location>
</feature>
<feature type="region of interest" description="B" evidence="1">
    <location>
        <begin position="344"/>
        <end position="560"/>
    </location>
</feature>
<feature type="region of interest" description="C" evidence="1">
    <location>
        <begin position="561"/>
        <end position="632"/>
    </location>
</feature>
<reference key="1">
    <citation type="journal article" date="2008" name="BMC Genomics">
        <title>The genome sequence of the fish pathogen Aliivibrio salmonicida strain LFI1238 shows extensive evidence of gene decay.</title>
        <authorList>
            <person name="Hjerde E."/>
            <person name="Lorentzen M.S."/>
            <person name="Holden M.T."/>
            <person name="Seeger K."/>
            <person name="Paulsen S."/>
            <person name="Bason N."/>
            <person name="Churcher C."/>
            <person name="Harris D."/>
            <person name="Norbertczak H."/>
            <person name="Quail M.A."/>
            <person name="Sanders S."/>
            <person name="Thurston S."/>
            <person name="Parkhill J."/>
            <person name="Willassen N.P."/>
            <person name="Thomson N.R."/>
        </authorList>
    </citation>
    <scope>NUCLEOTIDE SEQUENCE [LARGE SCALE GENOMIC DNA]</scope>
    <source>
        <strain>LFI1238</strain>
    </source>
</reference>
<evidence type="ECO:0000255" key="1">
    <source>
        <dbReference type="HAMAP-Rule" id="MF_00505"/>
    </source>
</evidence>
<proteinExistence type="inferred from homology"/>
<gene>
    <name evidence="1" type="primary">htpG</name>
    <name type="ordered locus">VSAL_I0814</name>
</gene>
<dbReference type="EMBL" id="FM178379">
    <property type="protein sequence ID" value="CAQ78499.1"/>
    <property type="molecule type" value="Genomic_DNA"/>
</dbReference>
<dbReference type="RefSeq" id="WP_012549603.1">
    <property type="nucleotide sequence ID" value="NC_011312.1"/>
</dbReference>
<dbReference type="SMR" id="B6EHJ9"/>
<dbReference type="KEGG" id="vsa:VSAL_I0814"/>
<dbReference type="eggNOG" id="COG0326">
    <property type="taxonomic scope" value="Bacteria"/>
</dbReference>
<dbReference type="HOGENOM" id="CLU_006684_3_0_6"/>
<dbReference type="Proteomes" id="UP000001730">
    <property type="component" value="Chromosome 1"/>
</dbReference>
<dbReference type="GO" id="GO:0005737">
    <property type="term" value="C:cytoplasm"/>
    <property type="evidence" value="ECO:0007669"/>
    <property type="project" value="UniProtKB-SubCell"/>
</dbReference>
<dbReference type="GO" id="GO:0005524">
    <property type="term" value="F:ATP binding"/>
    <property type="evidence" value="ECO:0007669"/>
    <property type="project" value="UniProtKB-UniRule"/>
</dbReference>
<dbReference type="GO" id="GO:0016887">
    <property type="term" value="F:ATP hydrolysis activity"/>
    <property type="evidence" value="ECO:0007669"/>
    <property type="project" value="InterPro"/>
</dbReference>
<dbReference type="GO" id="GO:0140662">
    <property type="term" value="F:ATP-dependent protein folding chaperone"/>
    <property type="evidence" value="ECO:0007669"/>
    <property type="project" value="InterPro"/>
</dbReference>
<dbReference type="GO" id="GO:0051082">
    <property type="term" value="F:unfolded protein binding"/>
    <property type="evidence" value="ECO:0007669"/>
    <property type="project" value="UniProtKB-UniRule"/>
</dbReference>
<dbReference type="CDD" id="cd16927">
    <property type="entry name" value="HATPase_Hsp90-like"/>
    <property type="match status" value="1"/>
</dbReference>
<dbReference type="FunFam" id="3.30.230.80:FF:000002">
    <property type="entry name" value="Molecular chaperone HtpG"/>
    <property type="match status" value="1"/>
</dbReference>
<dbReference type="FunFam" id="3.30.565.10:FF:000009">
    <property type="entry name" value="Molecular chaperone HtpG"/>
    <property type="match status" value="1"/>
</dbReference>
<dbReference type="Gene3D" id="3.30.230.80">
    <property type="match status" value="1"/>
</dbReference>
<dbReference type="Gene3D" id="3.40.50.11260">
    <property type="match status" value="1"/>
</dbReference>
<dbReference type="Gene3D" id="1.20.120.790">
    <property type="entry name" value="Heat shock protein 90, C-terminal domain"/>
    <property type="match status" value="1"/>
</dbReference>
<dbReference type="Gene3D" id="3.30.565.10">
    <property type="entry name" value="Histidine kinase-like ATPase, C-terminal domain"/>
    <property type="match status" value="1"/>
</dbReference>
<dbReference type="HAMAP" id="MF_00505">
    <property type="entry name" value="HSP90"/>
    <property type="match status" value="1"/>
</dbReference>
<dbReference type="InterPro" id="IPR036890">
    <property type="entry name" value="HATPase_C_sf"/>
</dbReference>
<dbReference type="InterPro" id="IPR019805">
    <property type="entry name" value="Heat_shock_protein_90_CS"/>
</dbReference>
<dbReference type="InterPro" id="IPR037196">
    <property type="entry name" value="HSP90_C"/>
</dbReference>
<dbReference type="InterPro" id="IPR001404">
    <property type="entry name" value="Hsp90_fam"/>
</dbReference>
<dbReference type="InterPro" id="IPR020575">
    <property type="entry name" value="Hsp90_N"/>
</dbReference>
<dbReference type="InterPro" id="IPR020568">
    <property type="entry name" value="Ribosomal_Su5_D2-typ_SF"/>
</dbReference>
<dbReference type="NCBIfam" id="NF003555">
    <property type="entry name" value="PRK05218.1"/>
    <property type="match status" value="1"/>
</dbReference>
<dbReference type="PANTHER" id="PTHR11528">
    <property type="entry name" value="HEAT SHOCK PROTEIN 90 FAMILY MEMBER"/>
    <property type="match status" value="1"/>
</dbReference>
<dbReference type="Pfam" id="PF13589">
    <property type="entry name" value="HATPase_c_3"/>
    <property type="match status" value="1"/>
</dbReference>
<dbReference type="Pfam" id="PF00183">
    <property type="entry name" value="HSP90"/>
    <property type="match status" value="1"/>
</dbReference>
<dbReference type="PIRSF" id="PIRSF002583">
    <property type="entry name" value="Hsp90"/>
    <property type="match status" value="1"/>
</dbReference>
<dbReference type="PRINTS" id="PR00775">
    <property type="entry name" value="HEATSHOCK90"/>
</dbReference>
<dbReference type="SMART" id="SM00387">
    <property type="entry name" value="HATPase_c"/>
    <property type="match status" value="1"/>
</dbReference>
<dbReference type="SUPFAM" id="SSF55874">
    <property type="entry name" value="ATPase domain of HSP90 chaperone/DNA topoisomerase II/histidine kinase"/>
    <property type="match status" value="1"/>
</dbReference>
<dbReference type="SUPFAM" id="SSF110942">
    <property type="entry name" value="HSP90 C-terminal domain"/>
    <property type="match status" value="1"/>
</dbReference>
<dbReference type="SUPFAM" id="SSF54211">
    <property type="entry name" value="Ribosomal protein S5 domain 2-like"/>
    <property type="match status" value="1"/>
</dbReference>
<dbReference type="PROSITE" id="PS00298">
    <property type="entry name" value="HSP90"/>
    <property type="match status" value="1"/>
</dbReference>
<comment type="function">
    <text evidence="1">Molecular chaperone. Has ATPase activity.</text>
</comment>
<comment type="subunit">
    <text evidence="1">Homodimer.</text>
</comment>
<comment type="subcellular location">
    <subcellularLocation>
        <location evidence="1">Cytoplasm</location>
    </subcellularLocation>
</comment>
<comment type="similarity">
    <text evidence="1">Belongs to the heat shock protein 90 family.</text>
</comment>
<name>HTPG_ALISL</name>
<accession>B6EHJ9</accession>
<sequence length="632" mass="71668">MSEQTINNKETRGFQSEVKQLLHLMIHSLYSNKEIFLRELISNASDASDKLRFKALSNGDLYEGNADLGVKISFNVEANTLTISDNGIGMGREDVIEHLGTIAKSGTADFFSKLSEDQSKDSQLIGQFGVGFYSAFIVADAVTVRTRVAGAAKDQAVQWHSEGEGDYTIEDVTKESRGTDIILHMRDEGKEFLSEWRLKEVIGKYSDHIGIPVSIWTVEKDEEGKETEGKWEQVNKAQALWTRNKSEIEDAEYQEFYKHVSHDFADPLTWSHNKVEGKNDYTSLLYIPAKAPFDMMNRDHKSGLKLYVQRVFVMDDAEQFMPSYLRFVKGLIDSNDLALNVSREILQDNKVTQSLRGACTKRVLSMLEKIAKKDNDKYLSFWKEFGQVLKEGLAEDFANKDKIAGLLRFASTNKDSSEQAISLASYVERMKEDQDKIFYLTSDSYAAAKNSPHLEQFKSKGIEVVLMYDRIDEWLMSYLTEFDGKQFQSITKAGLDLSKFENEAEKEKQKETTEEFKSVVERTKAYLGDRVKEVRTTFKLATTPAVVVTDDFEMGTQMAKLLEAAGQAAPEVKYIFEINPEHALIKQMADEADEEAFGRWVEMLLGQAMLAERGSLDDPSQFLSAMNQLLSK</sequence>
<keyword id="KW-0067">ATP-binding</keyword>
<keyword id="KW-0143">Chaperone</keyword>
<keyword id="KW-0963">Cytoplasm</keyword>
<keyword id="KW-0547">Nucleotide-binding</keyword>
<keyword id="KW-0346">Stress response</keyword>